<dbReference type="EMBL" id="CP000450">
    <property type="protein sequence ID" value="ABI59039.1"/>
    <property type="molecule type" value="Genomic_DNA"/>
</dbReference>
<dbReference type="RefSeq" id="WP_011633864.1">
    <property type="nucleotide sequence ID" value="NC_008344.1"/>
</dbReference>
<dbReference type="SMR" id="Q0AHZ3"/>
<dbReference type="STRING" id="335283.Neut_0769"/>
<dbReference type="KEGG" id="net:Neut_0769"/>
<dbReference type="eggNOG" id="COG1420">
    <property type="taxonomic scope" value="Bacteria"/>
</dbReference>
<dbReference type="HOGENOM" id="CLU_050019_0_0_4"/>
<dbReference type="OrthoDB" id="9783139at2"/>
<dbReference type="Proteomes" id="UP000001966">
    <property type="component" value="Chromosome"/>
</dbReference>
<dbReference type="GO" id="GO:0003677">
    <property type="term" value="F:DNA binding"/>
    <property type="evidence" value="ECO:0007669"/>
    <property type="project" value="InterPro"/>
</dbReference>
<dbReference type="GO" id="GO:0045892">
    <property type="term" value="P:negative regulation of DNA-templated transcription"/>
    <property type="evidence" value="ECO:0007669"/>
    <property type="project" value="UniProtKB-UniRule"/>
</dbReference>
<dbReference type="Gene3D" id="3.30.450.40">
    <property type="match status" value="1"/>
</dbReference>
<dbReference type="Gene3D" id="3.30.390.60">
    <property type="entry name" value="Heat-inducible transcription repressor hrca homolog, domain 3"/>
    <property type="match status" value="1"/>
</dbReference>
<dbReference type="Gene3D" id="1.10.10.10">
    <property type="entry name" value="Winged helix-like DNA-binding domain superfamily/Winged helix DNA-binding domain"/>
    <property type="match status" value="1"/>
</dbReference>
<dbReference type="HAMAP" id="MF_00081">
    <property type="entry name" value="HrcA"/>
    <property type="match status" value="1"/>
</dbReference>
<dbReference type="InterPro" id="IPR029016">
    <property type="entry name" value="GAF-like_dom_sf"/>
</dbReference>
<dbReference type="InterPro" id="IPR002571">
    <property type="entry name" value="HrcA"/>
</dbReference>
<dbReference type="InterPro" id="IPR021153">
    <property type="entry name" value="HrcA_C"/>
</dbReference>
<dbReference type="InterPro" id="IPR036388">
    <property type="entry name" value="WH-like_DNA-bd_sf"/>
</dbReference>
<dbReference type="InterPro" id="IPR036390">
    <property type="entry name" value="WH_DNA-bd_sf"/>
</dbReference>
<dbReference type="InterPro" id="IPR005104">
    <property type="entry name" value="WHTH_HrcA_DNA-bd"/>
</dbReference>
<dbReference type="InterPro" id="IPR023120">
    <property type="entry name" value="WHTH_transcript_rep_HrcA_IDD"/>
</dbReference>
<dbReference type="NCBIfam" id="TIGR00331">
    <property type="entry name" value="hrcA"/>
    <property type="match status" value="1"/>
</dbReference>
<dbReference type="PANTHER" id="PTHR34824">
    <property type="entry name" value="HEAT-INDUCIBLE TRANSCRIPTION REPRESSOR HRCA"/>
    <property type="match status" value="1"/>
</dbReference>
<dbReference type="PANTHER" id="PTHR34824:SF1">
    <property type="entry name" value="HEAT-INDUCIBLE TRANSCRIPTION REPRESSOR HRCA"/>
    <property type="match status" value="1"/>
</dbReference>
<dbReference type="Pfam" id="PF01628">
    <property type="entry name" value="HrcA"/>
    <property type="match status" value="1"/>
</dbReference>
<dbReference type="Pfam" id="PF03444">
    <property type="entry name" value="HrcA_DNA-bdg"/>
    <property type="match status" value="1"/>
</dbReference>
<dbReference type="PIRSF" id="PIRSF005485">
    <property type="entry name" value="HrcA"/>
    <property type="match status" value="1"/>
</dbReference>
<dbReference type="SUPFAM" id="SSF55781">
    <property type="entry name" value="GAF domain-like"/>
    <property type="match status" value="1"/>
</dbReference>
<dbReference type="SUPFAM" id="SSF46785">
    <property type="entry name" value="Winged helix' DNA-binding domain"/>
    <property type="match status" value="1"/>
</dbReference>
<protein>
    <recommendedName>
        <fullName evidence="1">Heat-inducible transcription repressor HrcA</fullName>
    </recommendedName>
</protein>
<reference key="1">
    <citation type="journal article" date="2007" name="Environ. Microbiol.">
        <title>Whole-genome analysis of the ammonia-oxidizing bacterium, Nitrosomonas eutropha C91: implications for niche adaptation.</title>
        <authorList>
            <person name="Stein L.Y."/>
            <person name="Arp D.J."/>
            <person name="Berube P.M."/>
            <person name="Chain P.S."/>
            <person name="Hauser L."/>
            <person name="Jetten M.S."/>
            <person name="Klotz M.G."/>
            <person name="Larimer F.W."/>
            <person name="Norton J.M."/>
            <person name="Op den Camp H.J.M."/>
            <person name="Shin M."/>
            <person name="Wei X."/>
        </authorList>
    </citation>
    <scope>NUCLEOTIDE SEQUENCE [LARGE SCALE GENOMIC DNA]</scope>
    <source>
        <strain>DSM 101675 / C91 / Nm57</strain>
    </source>
</reference>
<keyword id="KW-0678">Repressor</keyword>
<keyword id="KW-0346">Stress response</keyword>
<keyword id="KW-0804">Transcription</keyword>
<keyword id="KW-0805">Transcription regulation</keyword>
<gene>
    <name evidence="1" type="primary">hrcA</name>
    <name type="ordered locus">Neut_0769</name>
</gene>
<name>HRCA_NITEC</name>
<feature type="chain" id="PRO_1000010434" description="Heat-inducible transcription repressor HrcA">
    <location>
        <begin position="1"/>
        <end position="338"/>
    </location>
</feature>
<comment type="function">
    <text evidence="1">Negative regulator of class I heat shock genes (grpE-dnaK-dnaJ and groELS operons). Prevents heat-shock induction of these operons.</text>
</comment>
<comment type="similarity">
    <text evidence="1">Belongs to the HrcA family.</text>
</comment>
<proteinExistence type="inferred from homology"/>
<sequence>MLNERAKILLKTLVERYIHEGQPVGSRSLAKFSGLDLSPATIRNVMTDLEEMGFVSSPHTSAGRMPTTLGYRFFVDTLLVVQSLDNEQITLLENRMHPNNPSHLINVTSRLLSDLTQFVGVVVTPKRMGGAVFRHIEFVPLSEKRILLILVTPEGDVQNRIIFTETVYNQSDLIEAGNFLNQHYAGCALEEIRSGLQHELTQLRRNMTDLMNAAIEIGNAALQESSEAVVIAGEHKLFDVRDLSENLSSLKQLFELFERKSKLLQLMELSRQACGVKIFIGGESDETMLEEISVVTAPYEMEGKIVGTVGVIGPRRMAYERIIPIVDITARLLSNNLS</sequence>
<accession>Q0AHZ3</accession>
<organism>
    <name type="scientific">Nitrosomonas eutropha (strain DSM 101675 / C91 / Nm57)</name>
    <dbReference type="NCBI Taxonomy" id="335283"/>
    <lineage>
        <taxon>Bacteria</taxon>
        <taxon>Pseudomonadati</taxon>
        <taxon>Pseudomonadota</taxon>
        <taxon>Betaproteobacteria</taxon>
        <taxon>Nitrosomonadales</taxon>
        <taxon>Nitrosomonadaceae</taxon>
        <taxon>Nitrosomonas</taxon>
    </lineage>
</organism>
<evidence type="ECO:0000255" key="1">
    <source>
        <dbReference type="HAMAP-Rule" id="MF_00081"/>
    </source>
</evidence>